<name>UHRF1_XENLA</name>
<protein>
    <recommendedName>
        <fullName>E3 ubiquitin-protein ligase UHRF1</fullName>
        <ecNumber>2.3.2.27</ecNumber>
    </recommendedName>
    <alternativeName>
        <fullName>Nuclear zinc finger protein Np95</fullName>
        <shortName>XNp95</shortName>
    </alternativeName>
    <alternativeName>
        <fullName>RING-type E3 ubiquitin transferase UHRF1</fullName>
    </alternativeName>
    <alternativeName>
        <fullName>Ubiquitin-like PHD and RING finger domain-containing protein 1</fullName>
    </alternativeName>
    <alternativeName>
        <fullName>Ubiquitin-like-containing PHD and RING finger domains protein 1</fullName>
    </alternativeName>
</protein>
<reference key="1">
    <citation type="submission" date="2007-09" db="EMBL/GenBank/DDBJ databases">
        <title>Xenopus Homolog of XNp95.</title>
        <authorList>
            <person name="Lindsay H.D."/>
        </authorList>
    </citation>
    <scope>NUCLEOTIDE SEQUENCE [MRNA]</scope>
</reference>
<keyword id="KW-0131">Cell cycle</keyword>
<keyword id="KW-0156">Chromatin regulator</keyword>
<keyword id="KW-0238">DNA-binding</keyword>
<keyword id="KW-0479">Metal-binding</keyword>
<keyword id="KW-0539">Nucleus</keyword>
<keyword id="KW-1185">Reference proteome</keyword>
<keyword id="KW-0677">Repeat</keyword>
<keyword id="KW-0678">Repressor</keyword>
<keyword id="KW-0804">Transcription</keyword>
<keyword id="KW-0805">Transcription regulation</keyword>
<keyword id="KW-0808">Transferase</keyword>
<keyword id="KW-0833">Ubl conjugation pathway</keyword>
<keyword id="KW-0862">Zinc</keyword>
<keyword id="KW-0863">Zinc-finger</keyword>
<proteinExistence type="evidence at transcript level"/>
<evidence type="ECO:0000250" key="1"/>
<evidence type="ECO:0000255" key="2">
    <source>
        <dbReference type="PROSITE-ProRule" id="PRU00146"/>
    </source>
</evidence>
<evidence type="ECO:0000255" key="3">
    <source>
        <dbReference type="PROSITE-ProRule" id="PRU00175"/>
    </source>
</evidence>
<evidence type="ECO:0000255" key="4">
    <source>
        <dbReference type="PROSITE-ProRule" id="PRU00214"/>
    </source>
</evidence>
<evidence type="ECO:0000255" key="5">
    <source>
        <dbReference type="PROSITE-ProRule" id="PRU00358"/>
    </source>
</evidence>
<evidence type="ECO:0000256" key="6">
    <source>
        <dbReference type="SAM" id="MobiDB-lite"/>
    </source>
</evidence>
<dbReference type="EC" id="2.3.2.27"/>
<dbReference type="EMBL" id="EU177101">
    <property type="protein sequence ID" value="ABY28114.1"/>
    <property type="molecule type" value="mRNA"/>
</dbReference>
<dbReference type="RefSeq" id="NP_001129236.1">
    <property type="nucleotide sequence ID" value="NM_001135764.1"/>
</dbReference>
<dbReference type="RefSeq" id="XP_018091852.1">
    <property type="nucleotide sequence ID" value="XM_018236363.1"/>
</dbReference>
<dbReference type="SMR" id="B6CHA3"/>
<dbReference type="BioGRID" id="101600">
    <property type="interactions" value="3"/>
</dbReference>
<dbReference type="IntAct" id="B6CHA3">
    <property type="interactions" value="1"/>
</dbReference>
<dbReference type="MINT" id="B6CHA3"/>
<dbReference type="ChEMBL" id="CHEMBL4879407"/>
<dbReference type="GeneID" id="432234"/>
<dbReference type="KEGG" id="xla:432234"/>
<dbReference type="AGR" id="Xenbase:XB-GENE-5821540"/>
<dbReference type="CTD" id="432234"/>
<dbReference type="Xenbase" id="XB-GENE-5821540">
    <property type="gene designation" value="uhrf1.S"/>
</dbReference>
<dbReference type="OrthoDB" id="2270193at2759"/>
<dbReference type="UniPathway" id="UPA00143"/>
<dbReference type="Proteomes" id="UP000186698">
    <property type="component" value="Chromosome 1S"/>
</dbReference>
<dbReference type="Bgee" id="432234">
    <property type="expression patterns" value="Expressed in egg cell and 19 other cell types or tissues"/>
</dbReference>
<dbReference type="GO" id="GO:0000785">
    <property type="term" value="C:chromatin"/>
    <property type="evidence" value="ECO:0000250"/>
    <property type="project" value="UniProtKB"/>
</dbReference>
<dbReference type="GO" id="GO:0000791">
    <property type="term" value="C:euchromatin"/>
    <property type="evidence" value="ECO:0000250"/>
    <property type="project" value="UniProtKB"/>
</dbReference>
<dbReference type="GO" id="GO:0000792">
    <property type="term" value="C:heterochromatin"/>
    <property type="evidence" value="ECO:0000250"/>
    <property type="project" value="UniProtKB"/>
</dbReference>
<dbReference type="GO" id="GO:0005634">
    <property type="term" value="C:nucleus"/>
    <property type="evidence" value="ECO:0007669"/>
    <property type="project" value="UniProtKB-SubCell"/>
</dbReference>
<dbReference type="GO" id="GO:0005657">
    <property type="term" value="C:replication fork"/>
    <property type="evidence" value="ECO:0000250"/>
    <property type="project" value="UniProtKB"/>
</dbReference>
<dbReference type="GO" id="GO:0044729">
    <property type="term" value="F:hemi-methylated DNA-binding"/>
    <property type="evidence" value="ECO:0000250"/>
    <property type="project" value="UniProtKB"/>
</dbReference>
<dbReference type="GO" id="GO:0042393">
    <property type="term" value="F:histone binding"/>
    <property type="evidence" value="ECO:0000250"/>
    <property type="project" value="UniProtKB"/>
</dbReference>
<dbReference type="GO" id="GO:0062072">
    <property type="term" value="F:histone H3K9me2/3 reader activity"/>
    <property type="evidence" value="ECO:0000250"/>
    <property type="project" value="UniProtKB"/>
</dbReference>
<dbReference type="GO" id="GO:0061630">
    <property type="term" value="F:ubiquitin protein ligase activity"/>
    <property type="evidence" value="ECO:0000318"/>
    <property type="project" value="GO_Central"/>
</dbReference>
<dbReference type="GO" id="GO:0004842">
    <property type="term" value="F:ubiquitin-protein transferase activity"/>
    <property type="evidence" value="ECO:0000250"/>
    <property type="project" value="UniProtKB"/>
</dbReference>
<dbReference type="GO" id="GO:0008270">
    <property type="term" value="F:zinc ion binding"/>
    <property type="evidence" value="ECO:0000250"/>
    <property type="project" value="UniProtKB"/>
</dbReference>
<dbReference type="GO" id="GO:0031507">
    <property type="term" value="P:heterochromatin formation"/>
    <property type="evidence" value="ECO:0000250"/>
    <property type="project" value="UniProtKB"/>
</dbReference>
<dbReference type="GO" id="GO:0044027">
    <property type="term" value="P:negative regulation of gene expression via chromosomal CpG island methylation"/>
    <property type="evidence" value="ECO:0000250"/>
    <property type="project" value="UniProtKB"/>
</dbReference>
<dbReference type="GO" id="GO:0000122">
    <property type="term" value="P:negative regulation of transcription by RNA polymerase II"/>
    <property type="evidence" value="ECO:0000250"/>
    <property type="project" value="UniProtKB"/>
</dbReference>
<dbReference type="GO" id="GO:0016567">
    <property type="term" value="P:protein ubiquitination"/>
    <property type="evidence" value="ECO:0000318"/>
    <property type="project" value="GO_Central"/>
</dbReference>
<dbReference type="GO" id="GO:0006511">
    <property type="term" value="P:ubiquitin-dependent protein catabolic process"/>
    <property type="evidence" value="ECO:0000250"/>
    <property type="project" value="UniProtKB"/>
</dbReference>
<dbReference type="CDD" id="cd15525">
    <property type="entry name" value="PHD_UHRF1_2"/>
    <property type="match status" value="1"/>
</dbReference>
<dbReference type="CDD" id="cd16769">
    <property type="entry name" value="RING-HC_UHRF1"/>
    <property type="match status" value="1"/>
</dbReference>
<dbReference type="CDD" id="cd20455">
    <property type="entry name" value="Tudor_UHRF1_rpt1"/>
    <property type="match status" value="1"/>
</dbReference>
<dbReference type="CDD" id="cd20457">
    <property type="entry name" value="Tudor_UHRF1_rpt2"/>
    <property type="match status" value="1"/>
</dbReference>
<dbReference type="CDD" id="cd17122">
    <property type="entry name" value="Ubl_UHRF1"/>
    <property type="match status" value="1"/>
</dbReference>
<dbReference type="FunFam" id="2.30.30.140:FF:000179">
    <property type="entry name" value="E3 ubiquitin-protein ligase UHRF1"/>
    <property type="match status" value="1"/>
</dbReference>
<dbReference type="FunFam" id="2.30.280.10:FF:000001">
    <property type="entry name" value="E3 ubiquitin-protein ligase UHRF1 isoform 1"/>
    <property type="match status" value="1"/>
</dbReference>
<dbReference type="FunFam" id="3.10.20.90:FF:000143">
    <property type="entry name" value="E3 ubiquitin-protein ligase UHRF1 isoform 1"/>
    <property type="match status" value="1"/>
</dbReference>
<dbReference type="FunFam" id="2.30.30.1150:FF:000001">
    <property type="entry name" value="E3 ubiquitin-protein ligase UHRF2 isoform X1"/>
    <property type="match status" value="1"/>
</dbReference>
<dbReference type="FunFam" id="3.30.40.10:FF:000066">
    <property type="entry name" value="E3 ubiquitin-protein ligase UHRF2 isoform X1"/>
    <property type="match status" value="1"/>
</dbReference>
<dbReference type="Gene3D" id="2.30.30.1150">
    <property type="match status" value="1"/>
</dbReference>
<dbReference type="Gene3D" id="2.30.30.140">
    <property type="match status" value="1"/>
</dbReference>
<dbReference type="Gene3D" id="3.10.20.90">
    <property type="entry name" value="Phosphatidylinositol 3-kinase Catalytic Subunit, Chain A, domain 1"/>
    <property type="match status" value="1"/>
</dbReference>
<dbReference type="Gene3D" id="2.30.280.10">
    <property type="entry name" value="SRA-YDG"/>
    <property type="match status" value="1"/>
</dbReference>
<dbReference type="Gene3D" id="3.30.40.10">
    <property type="entry name" value="Zinc/RING finger domain, C3HC4 (zinc finger)"/>
    <property type="match status" value="1"/>
</dbReference>
<dbReference type="InterPro" id="IPR015947">
    <property type="entry name" value="PUA-like_sf"/>
</dbReference>
<dbReference type="InterPro" id="IPR036987">
    <property type="entry name" value="SRA-YDG_sf"/>
</dbReference>
<dbReference type="InterPro" id="IPR003105">
    <property type="entry name" value="SRA_YDG"/>
</dbReference>
<dbReference type="InterPro" id="IPR021991">
    <property type="entry name" value="TTD_dom"/>
</dbReference>
<dbReference type="InterPro" id="IPR000626">
    <property type="entry name" value="Ubiquitin-like_dom"/>
</dbReference>
<dbReference type="InterPro" id="IPR029071">
    <property type="entry name" value="Ubiquitin-like_domsf"/>
</dbReference>
<dbReference type="InterPro" id="IPR047406">
    <property type="entry name" value="Ubl_UHRF1"/>
</dbReference>
<dbReference type="InterPro" id="IPR045134">
    <property type="entry name" value="UHRF1/2-like"/>
</dbReference>
<dbReference type="InterPro" id="IPR011011">
    <property type="entry name" value="Znf_FYVE_PHD"/>
</dbReference>
<dbReference type="InterPro" id="IPR001965">
    <property type="entry name" value="Znf_PHD"/>
</dbReference>
<dbReference type="InterPro" id="IPR019787">
    <property type="entry name" value="Znf_PHD-finger"/>
</dbReference>
<dbReference type="InterPro" id="IPR001841">
    <property type="entry name" value="Znf_RING"/>
</dbReference>
<dbReference type="InterPro" id="IPR013083">
    <property type="entry name" value="Znf_RING/FYVE/PHD"/>
</dbReference>
<dbReference type="InterPro" id="IPR017907">
    <property type="entry name" value="Znf_RING_CS"/>
</dbReference>
<dbReference type="PANTHER" id="PTHR14140">
    <property type="entry name" value="E3 UBIQUITIN-PROTEIN LIGASE UHRF-RELATED"/>
    <property type="match status" value="1"/>
</dbReference>
<dbReference type="PANTHER" id="PTHR14140:SF2">
    <property type="entry name" value="E3 UBIQUITIN-PROTEIN LIGASE UHRF1"/>
    <property type="match status" value="1"/>
</dbReference>
<dbReference type="Pfam" id="PF00628">
    <property type="entry name" value="PHD"/>
    <property type="match status" value="1"/>
</dbReference>
<dbReference type="Pfam" id="PF02182">
    <property type="entry name" value="SAD_SRA"/>
    <property type="match status" value="1"/>
</dbReference>
<dbReference type="Pfam" id="PF12148">
    <property type="entry name" value="TTD"/>
    <property type="match status" value="1"/>
</dbReference>
<dbReference type="Pfam" id="PF00240">
    <property type="entry name" value="ubiquitin"/>
    <property type="match status" value="1"/>
</dbReference>
<dbReference type="SMART" id="SM00249">
    <property type="entry name" value="PHD"/>
    <property type="match status" value="1"/>
</dbReference>
<dbReference type="SMART" id="SM00184">
    <property type="entry name" value="RING"/>
    <property type="match status" value="2"/>
</dbReference>
<dbReference type="SMART" id="SM00466">
    <property type="entry name" value="SRA"/>
    <property type="match status" value="1"/>
</dbReference>
<dbReference type="SMART" id="SM00213">
    <property type="entry name" value="UBQ"/>
    <property type="match status" value="1"/>
</dbReference>
<dbReference type="SUPFAM" id="SSF57903">
    <property type="entry name" value="FYVE/PHD zinc finger"/>
    <property type="match status" value="1"/>
</dbReference>
<dbReference type="SUPFAM" id="SSF88697">
    <property type="entry name" value="PUA domain-like"/>
    <property type="match status" value="1"/>
</dbReference>
<dbReference type="SUPFAM" id="SSF57850">
    <property type="entry name" value="RING/U-box"/>
    <property type="match status" value="1"/>
</dbReference>
<dbReference type="SUPFAM" id="SSF54236">
    <property type="entry name" value="Ubiquitin-like"/>
    <property type="match status" value="1"/>
</dbReference>
<dbReference type="PROSITE" id="PS50053">
    <property type="entry name" value="UBIQUITIN_2"/>
    <property type="match status" value="1"/>
</dbReference>
<dbReference type="PROSITE" id="PS51015">
    <property type="entry name" value="YDG"/>
    <property type="match status" value="1"/>
</dbReference>
<dbReference type="PROSITE" id="PS01359">
    <property type="entry name" value="ZF_PHD_1"/>
    <property type="match status" value="1"/>
</dbReference>
<dbReference type="PROSITE" id="PS50016">
    <property type="entry name" value="ZF_PHD_2"/>
    <property type="match status" value="1"/>
</dbReference>
<dbReference type="PROSITE" id="PS00518">
    <property type="entry name" value="ZF_RING_1"/>
    <property type="match status" value="1"/>
</dbReference>
<dbReference type="PROSITE" id="PS50089">
    <property type="entry name" value="ZF_RING_2"/>
    <property type="match status" value="1"/>
</dbReference>
<sequence>MWIQVRTMDGRDTRRIDSLSKLTKVDDLRDRIQQLFGVALESQRLFYRGKQMENGHTLFDYSVGLNDIVQLLVRQIPDSFPTKHKECELSDASAGCGSGQRDSDSGSGEGAMDVDGQSISIIGENVGTSLYKKNDLVDARDLNMGAWFEAQIVNVSKKVGPYGTLPEVSDTSVTSDAIIYHVKYEDYPENGVVQLTCKDVRLRARTTLPWHEIKVGQVVMVNYNPDEPKERGYWYDAEILRKHESKKIKEIYAKVLLGDAGDSLNDCRIRFVNEIYKIEEPGSTYLNTESPQKRQNGPECKHCKDNPKRACRMCACCICGGKQDPEKQLLCDECDLAFHIYCLKPPLSVIPQDEDWYCPDCRNDASEVVLAGEKLKESKKKARMASANSSSQRDWGKGMACVGRSRECTIVPSNHYGPIPGVPVGTLWKFRVQVSESGVHRPHVAGIHGRSNDGSYSLVLAGGYEDDVDNGNEFTYTGSGGRDLSGNKRTAEQSCDQKLSNMNRALALNCSAPINDKEGSIAKDWRAGKPVRVVRNSKGRKHSKYAPEEGNRYDGIYKVVKYWPEKGKSGFLVWRYLLRRDDYEPAPWSKEGKERIKKLGLTMQYPDGYLETLASKEREKENKTEDEPIDSPSKGKRKRNSDNEQTAAKSIPKKMKVASYKLTLEQKTLIKQDVLNAKLWSEVMLFLKEGPKFVNKVEETFLCICCQEVVYEPVTTECHHNICKGCLDRSFKALVHSCPACRHDLGKNYPLNVNKPLQAILSQLFPGYESGR</sequence>
<comment type="function">
    <text>Multidomain protein that acts as a key epigenetic regulator by bridging DNA methylation and chromatin modification. Specifically recognizes and binds hemimethylated DNA at replication forks via its YDG domain and recruits dnmt1 methyltransferase to ensure faithful propagation of the DNA methylation patterns through DNA replication. In addition to its role in maintenance of DNA methylation, also plays a key role in chromatin modification: through its tudor-like regions and PHD-type zinc fingers, specifically recognizes and binds histone H3 trimethylated at 'Lys-9' (H3K9me3) and unmethylated at 'Arg-2' (H3R2me0), respectively, and recruits chromatin proteins. Enriched in pericentric heterochromatin where it recruits different chromatin modifiers required for this chromatin replication. Also localizes to euchromatic regions where it negatively regulates transcription possibly by impacting DNA methylation and histone modifications. Has E3 ubiquitin-protein ligase activity by mediating the ubiquitination of target proteins. However, it is still unclear how E3 ubiquitin-protein ligase activity is related to its role in chromatin in vivo.</text>
</comment>
<comment type="catalytic activity">
    <reaction>
        <text>S-ubiquitinyl-[E2 ubiquitin-conjugating enzyme]-L-cysteine + [acceptor protein]-L-lysine = [E2 ubiquitin-conjugating enzyme]-L-cysteine + N(6)-ubiquitinyl-[acceptor protein]-L-lysine.</text>
        <dbReference type="EC" id="2.3.2.27"/>
    </reaction>
</comment>
<comment type="pathway">
    <text>Protein modification; protein ubiquitination.</text>
</comment>
<comment type="subcellular location">
    <subcellularLocation>
        <location evidence="5">Nucleus</location>
    </subcellularLocation>
    <text evidence="1">Localizes to replication foci. Enriched in pericentric heterochromatin. Also localizes to euchromatic regions (By similarity).</text>
</comment>
<comment type="domain">
    <text evidence="1">The tudor-like regions specifically recognize and bind histone H3 unmethylated at 'Arg-2' (H3R2me0), while the PHD-type zinc finger specifically recognizes and binds histone H3 trimethylated at 'Lys-9' (H3K9me3).</text>
</comment>
<comment type="domain">
    <text evidence="1">The YDG domain (also named SRA domain) specifically recognizes and binds hemimethylated DNA at replication forks (DNA that is only methylated on the mother strand of replicating DNA).</text>
</comment>
<comment type="domain">
    <text evidence="1">The RING finger is required for ubiquitin ligase activity.</text>
</comment>
<feature type="chain" id="PRO_0000419989" description="E3 ubiquitin-protein ligase UHRF1">
    <location>
        <begin position="1"/>
        <end position="772"/>
    </location>
</feature>
<feature type="domain" description="Ubiquitin-like" evidence="4">
    <location>
        <begin position="1"/>
        <end position="77"/>
    </location>
</feature>
<feature type="domain" description="YDG" evidence="5">
    <location>
        <begin position="417"/>
        <end position="580"/>
    </location>
</feature>
<feature type="zinc finger region" description="PHD-type" evidence="2">
    <location>
        <begin position="297"/>
        <end position="364"/>
    </location>
</feature>
<feature type="zinc finger region" description="RING-type" evidence="3">
    <location>
        <begin position="703"/>
        <end position="742"/>
    </location>
</feature>
<feature type="region of interest" description="Disordered" evidence="6">
    <location>
        <begin position="90"/>
        <end position="111"/>
    </location>
</feature>
<feature type="region of interest" description="Tudor-like 1">
    <location>
        <begin position="129"/>
        <end position="205"/>
    </location>
</feature>
<feature type="region of interest" description="Tudor-like 2">
    <location>
        <begin position="212"/>
        <end position="281"/>
    </location>
</feature>
<feature type="region of interest" description="Linker" evidence="1">
    <location>
        <begin position="291"/>
        <end position="299"/>
    </location>
</feature>
<feature type="region of interest" description="Histone H3R2me0 binding" evidence="1">
    <location>
        <begin position="331"/>
        <end position="335"/>
    </location>
</feature>
<feature type="region of interest" description="Histone H3R2me0 binding" evidence="1">
    <location>
        <begin position="351"/>
        <end position="353"/>
    </location>
</feature>
<feature type="region of interest" description="Required to promote base flipping" evidence="1">
    <location>
        <begin position="443"/>
        <end position="444"/>
    </location>
</feature>
<feature type="region of interest" description="Required for formation of a 5-methylcytosine-binding pocket" evidence="1">
    <location>
        <begin position="464"/>
        <end position="467"/>
    </location>
</feature>
<feature type="region of interest" description="Required for formation of a 5-methylcytosine-binding pocket" evidence="1">
    <location>
        <begin position="476"/>
        <end position="479"/>
    </location>
</feature>
<feature type="region of interest" description="Disordered" evidence="6">
    <location>
        <begin position="615"/>
        <end position="649"/>
    </location>
</feature>
<feature type="compositionally biased region" description="Basic and acidic residues" evidence="6">
    <location>
        <begin position="615"/>
        <end position="626"/>
    </location>
</feature>
<feature type="binding site" evidence="1">
    <location>
        <begin position="461"/>
        <end position="462"/>
    </location>
    <ligand>
        <name>DNA</name>
        <dbReference type="ChEBI" id="CHEBI:16991"/>
    </ligand>
    <ligandPart>
        <name>5-methylcytosine group</name>
        <dbReference type="ChEBI" id="CHEBI:65274"/>
    </ligandPart>
</feature>
<feature type="binding site" evidence="1">
    <location>
        <position position="467"/>
    </location>
    <ligand>
        <name>DNA</name>
        <dbReference type="ChEBI" id="CHEBI:16991"/>
    </ligand>
    <ligandPart>
        <name>5-methylcytosine group</name>
        <dbReference type="ChEBI" id="CHEBI:65274"/>
    </ligandPart>
</feature>
<feature type="site" description="Histone H3K4me0 binding" evidence="1">
    <location>
        <position position="314"/>
    </location>
</feature>
<feature type="site" description="Histone H3R2me0 binding" evidence="1">
    <location>
        <position position="325"/>
    </location>
</feature>
<feature type="site" description="Histone H3R2me0 binding" evidence="1">
    <location>
        <position position="328"/>
    </location>
</feature>
<feature type="site" description="Required to confer preferential recognition of cytosine over thymine" evidence="1">
    <location>
        <position position="477"/>
    </location>
</feature>
<feature type="site" description="Required to discriminate between hemimethylated DNA versus symmetrically methylated DNA" evidence="1">
    <location>
        <position position="487"/>
    </location>
</feature>
<feature type="site" description="Required for affinity and specificity for 5-mCpG sequence" evidence="1">
    <location>
        <position position="489"/>
    </location>
</feature>
<accession>B6CHA3</accession>
<gene>
    <name type="primary">uhrf1</name>
    <name type="synonym">np95</name>
</gene>
<organism>
    <name type="scientific">Xenopus laevis</name>
    <name type="common">African clawed frog</name>
    <dbReference type="NCBI Taxonomy" id="8355"/>
    <lineage>
        <taxon>Eukaryota</taxon>
        <taxon>Metazoa</taxon>
        <taxon>Chordata</taxon>
        <taxon>Craniata</taxon>
        <taxon>Vertebrata</taxon>
        <taxon>Euteleostomi</taxon>
        <taxon>Amphibia</taxon>
        <taxon>Batrachia</taxon>
        <taxon>Anura</taxon>
        <taxon>Pipoidea</taxon>
        <taxon>Pipidae</taxon>
        <taxon>Xenopodinae</taxon>
        <taxon>Xenopus</taxon>
        <taxon>Xenopus</taxon>
    </lineage>
</organism>